<comment type="function">
    <molecule>Nociceptin</molecule>
    <text>Ligand of the opioid receptor-like receptor OPRL1. It may act as a transmitter in the brain by modulating nociceptive and locomotor behavior. May be involved in neuronal differentiation and development. When administered intracerebroventricularly, nociceptin induces hyperalgesia and decreases locomotor activity.</text>
</comment>
<comment type="function">
    <molecule>Nocistatin</molecule>
    <text evidence="1">Blocks nociceptin action in pain transmission by inhibiting nociceptin-induced hyperalgesia and allodynia.</text>
</comment>
<comment type="function">
    <molecule>Orphanin FQ2</molecule>
    <text evidence="5">Has potent analgesic activity.</text>
</comment>
<comment type="subcellular location">
    <subcellularLocation>
        <location>Secreted</location>
    </subcellularLocation>
</comment>
<comment type="alternative products">
    <event type="alternative splicing"/>
    <isoform>
        <id>Q64387-1</id>
        <name>Short</name>
        <name>N23K</name>
        <sequence type="displayed"/>
    </isoform>
    <isoform>
        <id>Q64387-2</id>
        <name>Long</name>
        <name>N27K</name>
        <sequence type="described" ref="VSP_001446"/>
    </isoform>
</comment>
<comment type="tissue specificity">
    <text>Brain and spinal cord. Low levels in kidney and spleen.</text>
</comment>
<comment type="developmental stage">
    <text>In embryonic brain, first detected at day 14 and in postnatal brain, levels increase in day 1 and day 18. Levels decrease significantly in adults.</text>
</comment>
<comment type="PTM">
    <text>Specific enzymatic cleavages at paired basic residues probably yield other active peptides besides nociceptin.</text>
</comment>
<comment type="PTM">
    <text>The N-terminal domain contains 6 conserved cysteines thought to be involved in disulfide bonding and/or processing.</text>
</comment>
<comment type="similarity">
    <text evidence="7">Belongs to the opioid neuropeptide precursor family.</text>
</comment>
<accession>Q64387</accession>
<accession>Q61105</accession>
<accession>Q61938</accession>
<evidence type="ECO:0000250" key="1">
    <source>
        <dbReference type="UniProtKB" id="O62647"/>
    </source>
</evidence>
<evidence type="ECO:0000250" key="2">
    <source>
        <dbReference type="UniProtKB" id="P55791"/>
    </source>
</evidence>
<evidence type="ECO:0000255" key="3"/>
<evidence type="ECO:0000256" key="4">
    <source>
        <dbReference type="SAM" id="MobiDB-lite"/>
    </source>
</evidence>
<evidence type="ECO:0000269" key="5">
    <source>
    </source>
</evidence>
<evidence type="ECO:0000303" key="6">
    <source>
    </source>
</evidence>
<evidence type="ECO:0000305" key="7"/>
<gene>
    <name type="primary">Pnoc</name>
    <name type="synonym">Npnc1</name>
</gene>
<protein>
    <recommendedName>
        <fullName>Prepronociceptin</fullName>
    </recommendedName>
    <alternativeName>
        <fullName>N23K/N27K</fullName>
    </alternativeName>
    <component>
        <recommendedName>
            <fullName>Nocistatin</fullName>
        </recommendedName>
    </component>
    <component>
        <recommendedName>
            <fullName>Nociceptin</fullName>
        </recommendedName>
        <alternativeName>
            <fullName>Orphanin FQ</fullName>
        </alternativeName>
        <alternativeName>
            <fullName>PPNOC</fullName>
        </alternativeName>
    </component>
    <component>
        <recommendedName>
            <fullName>Orphanin FQ2</fullName>
        </recommendedName>
    </component>
</protein>
<dbReference type="EMBL" id="D82866">
    <property type="protein sequence ID" value="BAA11614.1"/>
    <property type="molecule type" value="mRNA"/>
</dbReference>
<dbReference type="EMBL" id="D50056">
    <property type="protein sequence ID" value="BAA08774.1"/>
    <property type="molecule type" value="mRNA"/>
</dbReference>
<dbReference type="EMBL" id="X97373">
    <property type="protein sequence ID" value="CAA66042.1"/>
    <property type="molecule type" value="mRNA"/>
</dbReference>
<dbReference type="EMBL" id="X97371">
    <property type="protein sequence ID" value="CAA66041.1"/>
    <property type="molecule type" value="Genomic_DNA"/>
</dbReference>
<dbReference type="EMBL" id="X97372">
    <property type="protein sequence ID" value="CAA66041.1"/>
    <property type="status" value="JOINED"/>
    <property type="molecule type" value="Genomic_DNA"/>
</dbReference>
<dbReference type="EMBL" id="U44027">
    <property type="protein sequence ID" value="AAC52581.1"/>
    <property type="molecule type" value="mRNA"/>
</dbReference>
<dbReference type="EMBL" id="D50055">
    <property type="protein sequence ID" value="BAA08773.1"/>
    <property type="molecule type" value="mRNA"/>
</dbReference>
<dbReference type="CCDS" id="CCDS27213.1">
    <molecule id="Q64387-1"/>
</dbReference>
<dbReference type="CCDS" id="CCDS88690.1">
    <molecule id="Q64387-2"/>
</dbReference>
<dbReference type="PIR" id="JC4502">
    <property type="entry name" value="JC4502"/>
</dbReference>
<dbReference type="PIR" id="S70631">
    <property type="entry name" value="S70631"/>
</dbReference>
<dbReference type="RefSeq" id="NP_001192004.1">
    <molecule id="Q64387-2"/>
    <property type="nucleotide sequence ID" value="NM_001205075.2"/>
</dbReference>
<dbReference type="RefSeq" id="NP_001411417.1">
    <molecule id="Q64387-1"/>
    <property type="nucleotide sequence ID" value="NM_001424488.1"/>
</dbReference>
<dbReference type="RefSeq" id="NP_001411418.1">
    <molecule id="Q64387-2"/>
    <property type="nucleotide sequence ID" value="NM_001424489.1"/>
</dbReference>
<dbReference type="RefSeq" id="NP_035062.1">
    <molecule id="Q64387-1"/>
    <property type="nucleotide sequence ID" value="NM_010932.3"/>
</dbReference>
<dbReference type="RefSeq" id="XP_006518747.1">
    <property type="nucleotide sequence ID" value="XM_006518684.2"/>
</dbReference>
<dbReference type="BioGRID" id="201827">
    <property type="interactions" value="1"/>
</dbReference>
<dbReference type="FunCoup" id="Q64387">
    <property type="interactions" value="451"/>
</dbReference>
<dbReference type="STRING" id="10090.ENSMUSP00000054210"/>
<dbReference type="iPTMnet" id="Q64387"/>
<dbReference type="PhosphoSitePlus" id="Q64387"/>
<dbReference type="PaxDb" id="10090-ENSMUSP00000054210"/>
<dbReference type="ProteomicsDB" id="289465">
    <molecule id="Q64387-1"/>
</dbReference>
<dbReference type="ProteomicsDB" id="289466">
    <molecule id="Q64387-2"/>
</dbReference>
<dbReference type="Antibodypedia" id="10388">
    <property type="antibodies" value="295 antibodies from 30 providers"/>
</dbReference>
<dbReference type="DNASU" id="18155"/>
<dbReference type="Ensembl" id="ENSMUST00000059339.6">
    <molecule id="Q64387-1"/>
    <property type="protein sequence ID" value="ENSMUSP00000054210.6"/>
    <property type="gene ID" value="ENSMUSG00000045731.7"/>
</dbReference>
<dbReference type="Ensembl" id="ENSMUST00000224594.2">
    <molecule id="Q64387-2"/>
    <property type="protein sequence ID" value="ENSMUSP00000153589.2"/>
    <property type="gene ID" value="ENSMUSG00000045731.7"/>
</dbReference>
<dbReference type="GeneID" id="18155"/>
<dbReference type="KEGG" id="mmu:18155"/>
<dbReference type="UCSC" id="uc007uji.2">
    <molecule id="Q64387-1"/>
    <property type="organism name" value="mouse"/>
</dbReference>
<dbReference type="AGR" id="MGI:105308"/>
<dbReference type="CTD" id="5368"/>
<dbReference type="MGI" id="MGI:105308">
    <property type="gene designation" value="Pnoc"/>
</dbReference>
<dbReference type="VEuPathDB" id="HostDB:ENSMUSG00000045731"/>
<dbReference type="eggNOG" id="ENOG502S0DD">
    <property type="taxonomic scope" value="Eukaryota"/>
</dbReference>
<dbReference type="GeneTree" id="ENSGT00950000183149"/>
<dbReference type="HOGENOM" id="CLU_143892_0_0_1"/>
<dbReference type="InParanoid" id="Q64387"/>
<dbReference type="OMA" id="DCLNCHR"/>
<dbReference type="OrthoDB" id="9884757at2759"/>
<dbReference type="PhylomeDB" id="Q64387"/>
<dbReference type="TreeFam" id="TF332620"/>
<dbReference type="Reactome" id="R-MMU-375276">
    <property type="pathway name" value="Peptide ligand-binding receptors"/>
</dbReference>
<dbReference type="Reactome" id="R-MMU-418594">
    <property type="pathway name" value="G alpha (i) signalling events"/>
</dbReference>
<dbReference type="BioGRID-ORCS" id="18155">
    <property type="hits" value="1 hit in 76 CRISPR screens"/>
</dbReference>
<dbReference type="PRO" id="PR:Q64387"/>
<dbReference type="Proteomes" id="UP000000589">
    <property type="component" value="Chromosome 14"/>
</dbReference>
<dbReference type="RNAct" id="Q64387">
    <property type="molecule type" value="protein"/>
</dbReference>
<dbReference type="Bgee" id="ENSMUSG00000045731">
    <property type="expression patterns" value="Expressed in lateral septal nucleus and 82 other cell types or tissues"/>
</dbReference>
<dbReference type="ExpressionAtlas" id="Q64387">
    <property type="expression patterns" value="baseline and differential"/>
</dbReference>
<dbReference type="GO" id="GO:0005576">
    <property type="term" value="C:extracellular region"/>
    <property type="evidence" value="ECO:0007669"/>
    <property type="project" value="UniProtKB-SubCell"/>
</dbReference>
<dbReference type="GO" id="GO:0097060">
    <property type="term" value="C:synaptic membrane"/>
    <property type="evidence" value="ECO:0000316"/>
    <property type="project" value="MGI"/>
</dbReference>
<dbReference type="GO" id="GO:0001515">
    <property type="term" value="F:opioid peptide activity"/>
    <property type="evidence" value="ECO:0007669"/>
    <property type="project" value="UniProtKB-KW"/>
</dbReference>
<dbReference type="GO" id="GO:0048018">
    <property type="term" value="F:receptor ligand activity"/>
    <property type="evidence" value="ECO:0000316"/>
    <property type="project" value="MGI"/>
</dbReference>
<dbReference type="GO" id="GO:0007270">
    <property type="term" value="P:neuron-neuron synaptic transmission"/>
    <property type="evidence" value="ECO:0000316"/>
    <property type="project" value="MGI"/>
</dbReference>
<dbReference type="GO" id="GO:0007218">
    <property type="term" value="P:neuropeptide signaling pathway"/>
    <property type="evidence" value="ECO:0007669"/>
    <property type="project" value="UniProtKB-KW"/>
</dbReference>
<dbReference type="GO" id="GO:0019233">
    <property type="term" value="P:sensory perception of pain"/>
    <property type="evidence" value="ECO:0000316"/>
    <property type="project" value="MGI"/>
</dbReference>
<dbReference type="InterPro" id="IPR002367">
    <property type="entry name" value="Nociceptin"/>
</dbReference>
<dbReference type="InterPro" id="IPR006024">
    <property type="entry name" value="Opioid_neupept"/>
</dbReference>
<dbReference type="PANTHER" id="PTHR11438:SF2">
    <property type="entry name" value="PREPRONOCICEPTIN"/>
    <property type="match status" value="1"/>
</dbReference>
<dbReference type="PANTHER" id="PTHR11438">
    <property type="entry name" value="PROENKEPHALIN"/>
    <property type="match status" value="1"/>
</dbReference>
<dbReference type="Pfam" id="PF01160">
    <property type="entry name" value="Opiods_neuropep"/>
    <property type="match status" value="1"/>
</dbReference>
<dbReference type="PRINTS" id="PR01028">
    <property type="entry name" value="OPIOIDPRCRSR"/>
</dbReference>
<dbReference type="PRINTS" id="PR01031">
    <property type="entry name" value="ORPHNNPRCRSR"/>
</dbReference>
<dbReference type="PROSITE" id="PS01252">
    <property type="entry name" value="OPIOIDS_PRECURSOR"/>
    <property type="match status" value="1"/>
</dbReference>
<keyword id="KW-0025">Alternative splicing</keyword>
<keyword id="KW-0165">Cleavage on pair of basic residues</keyword>
<keyword id="KW-1015">Disulfide bond</keyword>
<keyword id="KW-0527">Neuropeptide</keyword>
<keyword id="KW-0529">Neurotransmitter</keyword>
<keyword id="KW-0555">Opioid peptide</keyword>
<keyword id="KW-1185">Reference proteome</keyword>
<keyword id="KW-0677">Repeat</keyword>
<keyword id="KW-0964">Secreted</keyword>
<keyword id="KW-0732">Signal</keyword>
<organism>
    <name type="scientific">Mus musculus</name>
    <name type="common">Mouse</name>
    <dbReference type="NCBI Taxonomy" id="10090"/>
    <lineage>
        <taxon>Eukaryota</taxon>
        <taxon>Metazoa</taxon>
        <taxon>Chordata</taxon>
        <taxon>Craniata</taxon>
        <taxon>Vertebrata</taxon>
        <taxon>Euteleostomi</taxon>
        <taxon>Mammalia</taxon>
        <taxon>Eutheria</taxon>
        <taxon>Euarchontoglires</taxon>
        <taxon>Glires</taxon>
        <taxon>Rodentia</taxon>
        <taxon>Myomorpha</taxon>
        <taxon>Muroidea</taxon>
        <taxon>Muridae</taxon>
        <taxon>Murinae</taxon>
        <taxon>Mus</taxon>
        <taxon>Mus</taxon>
    </lineage>
</organism>
<feature type="signal peptide" evidence="3">
    <location>
        <begin position="1"/>
        <end position="19"/>
    </location>
</feature>
<feature type="propeptide" id="PRO_0000008330">
    <location>
        <begin position="20"/>
        <end position="95"/>
    </location>
</feature>
<feature type="peptide" id="PRO_0000008331" description="Nocistatin" evidence="7">
    <location>
        <begin position="98"/>
        <end position="138"/>
    </location>
</feature>
<feature type="peptide" id="PRO_0000008332" description="Nociceptin" evidence="2">
    <location>
        <begin position="141"/>
        <end position="157"/>
    </location>
</feature>
<feature type="peptide" id="PRO_0000008333" description="Orphanin FQ2" evidence="7">
    <location>
        <begin position="160"/>
        <end position="176"/>
    </location>
</feature>
<feature type="propeptide" id="PRO_0000008334">
    <location>
        <begin position="180"/>
        <end position="187"/>
    </location>
</feature>
<feature type="repeat" description="1">
    <location>
        <begin position="109"/>
        <end position="114"/>
    </location>
</feature>
<feature type="repeat" description="2">
    <location>
        <begin position="115"/>
        <end position="120"/>
    </location>
</feature>
<feature type="repeat" description="3">
    <location>
        <begin position="121"/>
        <end position="126"/>
    </location>
</feature>
<feature type="region of interest" description="Disordered" evidence="4">
    <location>
        <begin position="109"/>
        <end position="133"/>
    </location>
</feature>
<feature type="region of interest" description="3 X 6 AA tandem repeats of D-A-E-P-G-A">
    <location>
        <begin position="109"/>
        <end position="126"/>
    </location>
</feature>
<feature type="compositionally biased region" description="Acidic residues" evidence="4">
    <location>
        <begin position="112"/>
        <end position="131"/>
    </location>
</feature>
<feature type="splice variant" id="VSP_001446" description="In isoform Long." evidence="6">
    <original>NV</original>
    <variation>IQVIPRTACVHSKTCRPGVRIPPSPRH</variation>
    <location>
        <begin position="186"/>
        <end position="187"/>
    </location>
</feature>
<feature type="sequence conflict" description="In Ref. 5; AAC52581." evidence="7" ref="5">
    <original>V</original>
    <variation>T</variation>
    <location>
        <position position="80"/>
    </location>
</feature>
<reference key="1">
    <citation type="journal article" date="1996" name="Biochem. Biophys. Res. Commun.">
        <title>Structure and regional distribution of nociceptin/orphanin FQ precursor.</title>
        <authorList>
            <person name="Houtani T."/>
            <person name="Nishi M."/>
            <person name="Takeshima H."/>
            <person name="Nukada T."/>
            <person name="Sugimoto T."/>
        </authorList>
    </citation>
    <scope>NUCLEOTIDE SEQUENCE [MRNA] (ISOFORM SHORT)</scope>
    <source>
        <tissue>Brain</tissue>
    </source>
</reference>
<reference key="2">
    <citation type="journal article" date="1995" name="Biochem. Biophys. Res. Commun.">
        <title>N23K, a gene transiently up-regulated during neural differentiation, encodes a precursor protein for a newly identified neuropeptide nociceptin.</title>
        <authorList>
            <person name="Saito Y."/>
            <person name="Maruyama K."/>
            <person name="Saido T.C."/>
            <person name="Kawashima S."/>
        </authorList>
    </citation>
    <scope>NUCLEOTIDE SEQUENCE [MRNA] (ISOFORM SHORT)</scope>
</reference>
<reference key="3">
    <citation type="journal article" date="1996" name="Proc. Natl. Acad. Sci. U.S.A.">
        <title>Structure, tissue distribution, and chromosomal localization of the prepronociceptin gene.</title>
        <authorList>
            <person name="Mollereau C."/>
            <person name="Simons M.-J."/>
            <person name="Soularue P."/>
            <person name="Liners F."/>
            <person name="Vassart G."/>
            <person name="Meunier J.-C."/>
            <person name="Parmentier M."/>
        </authorList>
    </citation>
    <scope>NUCLEOTIDE SEQUENCE [GENOMIC DNA / MRNA] (ISOFORM SHORT)</scope>
    <source>
        <strain>129/Sv</strain>
    </source>
</reference>
<reference key="4">
    <citation type="journal article" date="1996" name="J. Biol. Chem.">
        <title>Molecular cloning and characterization of a novel form of neuropeptide gene as a developmentally regulated molecule.</title>
        <authorList>
            <person name="Saito Y."/>
            <person name="Maruyama K."/>
            <person name="Kawano H."/>
            <person name="Hagino-Yamagishi K."/>
            <person name="Kawamura K."/>
            <person name="Saido T.C."/>
            <person name="Kawashima S."/>
        </authorList>
    </citation>
    <scope>NUCLEOTIDE SEQUENCE [MRNA] (ISOFORM LONG)</scope>
</reference>
<reference key="5">
    <citation type="journal article" date="1996" name="Biochem. J.">
        <title>Cloning and expression of a cDNA encoding a mouse brain orphanin FQ/nociceptin precursor.</title>
        <authorList>
            <person name="Pan Y.-X."/>
            <person name="Xu J."/>
            <person name="Pasternak G.W."/>
        </authorList>
    </citation>
    <scope>NUCLEOTIDE SEQUENCE [MRNA] OF 79-187</scope>
    <source>
        <tissue>Brain</tissue>
    </source>
</reference>
<reference key="6">
    <citation type="journal article" date="1998" name="NeuroReport">
        <title>Analgesic activity of orphanin FQ2, murine prepro-orphanin FQ141-157 in mice.</title>
        <authorList>
            <person name="Rossi G.C."/>
            <person name="Mathis J.P."/>
            <person name="Pasternak G.W."/>
        </authorList>
    </citation>
    <scope>FUNCTION OF ORPHANIN FQ2</scope>
</reference>
<proteinExistence type="evidence at transcript level"/>
<sequence>MKILFCDVLLLSLLSSVFSSCPRDCLTCQEKLHPAPDSFNLKTCILQCEEKVFPRPLWTVCTKVMASGSGQLSPADPELVSAALYQPKASEMQHLKRMPRVRSLVQVRDAEPGADAEPGADAEPGADDAEEVEQKQLQKRFGGFTGARKSARKLANQKRFSEFMRQYLVLSMQSSQRRRTLHQNGNV</sequence>
<name>PNOC_MOUSE</name>